<sequence length="338" mass="36957">MKVFYDKDCDLSLIKGKTVAIIGYGSQGHAHAQNLNDSGVKVVVGLRKGGASWDKVGKAGLTVKEVNDAVKEADVVMILLPDEQIAEVYKNNVEPHIKQGASLAFAHGFNVHYNQVVPRADLDVWMVAPKAPGHTVRNTYTQGGGVPHLVAVHQDKSGKARDLALSYAMANGGGKAGIIETNFKEETETDLFGEQAVLCGGAVELIKMGYETLVEAGYAPEMAYFECLHELKLIVDLIYEGGIANMNYSISNNAEFGEYVTGPEVINEQSRAAMRNALKRIQNGDYAKMFIQEGRLNYPSMTARRRNTADHSIEVVGAQLRAMMPWIAKNKLVDQTRN</sequence>
<dbReference type="EC" id="1.1.1.86" evidence="1"/>
<dbReference type="EMBL" id="CP000539">
    <property type="protein sequence ID" value="ABM41959.1"/>
    <property type="molecule type" value="Genomic_DNA"/>
</dbReference>
<dbReference type="SMR" id="A1W6T4"/>
<dbReference type="STRING" id="232721.Ajs_1771"/>
<dbReference type="KEGG" id="ajs:Ajs_1771"/>
<dbReference type="eggNOG" id="COG0059">
    <property type="taxonomic scope" value="Bacteria"/>
</dbReference>
<dbReference type="HOGENOM" id="CLU_033821_0_1_4"/>
<dbReference type="UniPathway" id="UPA00047">
    <property type="reaction ID" value="UER00056"/>
</dbReference>
<dbReference type="UniPathway" id="UPA00049">
    <property type="reaction ID" value="UER00060"/>
</dbReference>
<dbReference type="Proteomes" id="UP000000645">
    <property type="component" value="Chromosome"/>
</dbReference>
<dbReference type="GO" id="GO:0005829">
    <property type="term" value="C:cytosol"/>
    <property type="evidence" value="ECO:0007669"/>
    <property type="project" value="TreeGrafter"/>
</dbReference>
<dbReference type="GO" id="GO:0004455">
    <property type="term" value="F:ketol-acid reductoisomerase activity"/>
    <property type="evidence" value="ECO:0007669"/>
    <property type="project" value="UniProtKB-UniRule"/>
</dbReference>
<dbReference type="GO" id="GO:0000287">
    <property type="term" value="F:magnesium ion binding"/>
    <property type="evidence" value="ECO:0007669"/>
    <property type="project" value="UniProtKB-UniRule"/>
</dbReference>
<dbReference type="GO" id="GO:0050661">
    <property type="term" value="F:NADP binding"/>
    <property type="evidence" value="ECO:0007669"/>
    <property type="project" value="InterPro"/>
</dbReference>
<dbReference type="GO" id="GO:0009097">
    <property type="term" value="P:isoleucine biosynthetic process"/>
    <property type="evidence" value="ECO:0007669"/>
    <property type="project" value="UniProtKB-UniRule"/>
</dbReference>
<dbReference type="GO" id="GO:0009099">
    <property type="term" value="P:L-valine biosynthetic process"/>
    <property type="evidence" value="ECO:0007669"/>
    <property type="project" value="UniProtKB-UniRule"/>
</dbReference>
<dbReference type="FunFam" id="3.40.50.720:FF:000023">
    <property type="entry name" value="Ketol-acid reductoisomerase (NADP(+))"/>
    <property type="match status" value="1"/>
</dbReference>
<dbReference type="Gene3D" id="6.10.240.10">
    <property type="match status" value="1"/>
</dbReference>
<dbReference type="Gene3D" id="3.40.50.720">
    <property type="entry name" value="NAD(P)-binding Rossmann-like Domain"/>
    <property type="match status" value="1"/>
</dbReference>
<dbReference type="HAMAP" id="MF_00435">
    <property type="entry name" value="IlvC"/>
    <property type="match status" value="1"/>
</dbReference>
<dbReference type="InterPro" id="IPR008927">
    <property type="entry name" value="6-PGluconate_DH-like_C_sf"/>
</dbReference>
<dbReference type="InterPro" id="IPR013023">
    <property type="entry name" value="KARI"/>
</dbReference>
<dbReference type="InterPro" id="IPR000506">
    <property type="entry name" value="KARI_C"/>
</dbReference>
<dbReference type="InterPro" id="IPR013116">
    <property type="entry name" value="KARI_N"/>
</dbReference>
<dbReference type="InterPro" id="IPR014359">
    <property type="entry name" value="KARI_prok"/>
</dbReference>
<dbReference type="InterPro" id="IPR036291">
    <property type="entry name" value="NAD(P)-bd_dom_sf"/>
</dbReference>
<dbReference type="NCBIfam" id="TIGR00465">
    <property type="entry name" value="ilvC"/>
    <property type="match status" value="1"/>
</dbReference>
<dbReference type="NCBIfam" id="NF004017">
    <property type="entry name" value="PRK05479.1"/>
    <property type="match status" value="1"/>
</dbReference>
<dbReference type="NCBIfam" id="NF009940">
    <property type="entry name" value="PRK13403.1"/>
    <property type="match status" value="1"/>
</dbReference>
<dbReference type="PANTHER" id="PTHR21371">
    <property type="entry name" value="KETOL-ACID REDUCTOISOMERASE, MITOCHONDRIAL"/>
    <property type="match status" value="1"/>
</dbReference>
<dbReference type="PANTHER" id="PTHR21371:SF1">
    <property type="entry name" value="KETOL-ACID REDUCTOISOMERASE, MITOCHONDRIAL"/>
    <property type="match status" value="1"/>
</dbReference>
<dbReference type="Pfam" id="PF01450">
    <property type="entry name" value="KARI_C"/>
    <property type="match status" value="1"/>
</dbReference>
<dbReference type="Pfam" id="PF07991">
    <property type="entry name" value="KARI_N"/>
    <property type="match status" value="1"/>
</dbReference>
<dbReference type="PIRSF" id="PIRSF000116">
    <property type="entry name" value="IlvC_gammaproteo"/>
    <property type="match status" value="1"/>
</dbReference>
<dbReference type="SUPFAM" id="SSF48179">
    <property type="entry name" value="6-phosphogluconate dehydrogenase C-terminal domain-like"/>
    <property type="match status" value="1"/>
</dbReference>
<dbReference type="SUPFAM" id="SSF51735">
    <property type="entry name" value="NAD(P)-binding Rossmann-fold domains"/>
    <property type="match status" value="1"/>
</dbReference>
<dbReference type="PROSITE" id="PS51851">
    <property type="entry name" value="KARI_C"/>
    <property type="match status" value="1"/>
</dbReference>
<dbReference type="PROSITE" id="PS51850">
    <property type="entry name" value="KARI_N"/>
    <property type="match status" value="1"/>
</dbReference>
<feature type="chain" id="PRO_1000050472" description="Ketol-acid reductoisomerase (NADP(+))">
    <location>
        <begin position="1"/>
        <end position="338"/>
    </location>
</feature>
<feature type="domain" description="KARI N-terminal Rossmann" evidence="2">
    <location>
        <begin position="1"/>
        <end position="181"/>
    </location>
</feature>
<feature type="domain" description="KARI C-terminal knotted" evidence="3">
    <location>
        <begin position="182"/>
        <end position="327"/>
    </location>
</feature>
<feature type="active site" evidence="1">
    <location>
        <position position="107"/>
    </location>
</feature>
<feature type="binding site" evidence="1">
    <location>
        <begin position="24"/>
        <end position="27"/>
    </location>
    <ligand>
        <name>NADP(+)</name>
        <dbReference type="ChEBI" id="CHEBI:58349"/>
    </ligand>
</feature>
<feature type="binding site" evidence="1">
    <location>
        <position position="47"/>
    </location>
    <ligand>
        <name>NADP(+)</name>
        <dbReference type="ChEBI" id="CHEBI:58349"/>
    </ligand>
</feature>
<feature type="binding site" evidence="1">
    <location>
        <position position="52"/>
    </location>
    <ligand>
        <name>NADP(+)</name>
        <dbReference type="ChEBI" id="CHEBI:58349"/>
    </ligand>
</feature>
<feature type="binding site" evidence="1">
    <location>
        <position position="133"/>
    </location>
    <ligand>
        <name>NADP(+)</name>
        <dbReference type="ChEBI" id="CHEBI:58349"/>
    </ligand>
</feature>
<feature type="binding site" evidence="1">
    <location>
        <position position="190"/>
    </location>
    <ligand>
        <name>Mg(2+)</name>
        <dbReference type="ChEBI" id="CHEBI:18420"/>
        <label>1</label>
    </ligand>
</feature>
<feature type="binding site" evidence="1">
    <location>
        <position position="190"/>
    </location>
    <ligand>
        <name>Mg(2+)</name>
        <dbReference type="ChEBI" id="CHEBI:18420"/>
        <label>2</label>
    </ligand>
</feature>
<feature type="binding site" evidence="1">
    <location>
        <position position="194"/>
    </location>
    <ligand>
        <name>Mg(2+)</name>
        <dbReference type="ChEBI" id="CHEBI:18420"/>
        <label>1</label>
    </ligand>
</feature>
<feature type="binding site" evidence="1">
    <location>
        <position position="226"/>
    </location>
    <ligand>
        <name>Mg(2+)</name>
        <dbReference type="ChEBI" id="CHEBI:18420"/>
        <label>2</label>
    </ligand>
</feature>
<feature type="binding site" evidence="1">
    <location>
        <position position="230"/>
    </location>
    <ligand>
        <name>Mg(2+)</name>
        <dbReference type="ChEBI" id="CHEBI:18420"/>
        <label>2</label>
    </ligand>
</feature>
<feature type="binding site" evidence="1">
    <location>
        <position position="251"/>
    </location>
    <ligand>
        <name>substrate</name>
    </ligand>
</feature>
<gene>
    <name evidence="1" type="primary">ilvC</name>
    <name type="ordered locus">Ajs_1771</name>
</gene>
<proteinExistence type="inferred from homology"/>
<evidence type="ECO:0000255" key="1">
    <source>
        <dbReference type="HAMAP-Rule" id="MF_00435"/>
    </source>
</evidence>
<evidence type="ECO:0000255" key="2">
    <source>
        <dbReference type="PROSITE-ProRule" id="PRU01197"/>
    </source>
</evidence>
<evidence type="ECO:0000255" key="3">
    <source>
        <dbReference type="PROSITE-ProRule" id="PRU01198"/>
    </source>
</evidence>
<name>ILVC_ACISJ</name>
<protein>
    <recommendedName>
        <fullName evidence="1">Ketol-acid reductoisomerase (NADP(+))</fullName>
        <shortName evidence="1">KARI</shortName>
        <ecNumber evidence="1">1.1.1.86</ecNumber>
    </recommendedName>
    <alternativeName>
        <fullName evidence="1">Acetohydroxy-acid isomeroreductase</fullName>
        <shortName evidence="1">AHIR</shortName>
    </alternativeName>
    <alternativeName>
        <fullName evidence="1">Alpha-keto-beta-hydroxylacyl reductoisomerase</fullName>
    </alternativeName>
    <alternativeName>
        <fullName evidence="1">Ketol-acid reductoisomerase type 1</fullName>
    </alternativeName>
    <alternativeName>
        <fullName evidence="1">Ketol-acid reductoisomerase type I</fullName>
    </alternativeName>
</protein>
<keyword id="KW-0028">Amino-acid biosynthesis</keyword>
<keyword id="KW-0100">Branched-chain amino acid biosynthesis</keyword>
<keyword id="KW-0460">Magnesium</keyword>
<keyword id="KW-0479">Metal-binding</keyword>
<keyword id="KW-0521">NADP</keyword>
<keyword id="KW-0560">Oxidoreductase</keyword>
<accession>A1W6T4</accession>
<reference key="1">
    <citation type="submission" date="2006-12" db="EMBL/GenBank/DDBJ databases">
        <title>Complete sequence of chromosome 1 of Acidovorax sp. JS42.</title>
        <authorList>
            <person name="Copeland A."/>
            <person name="Lucas S."/>
            <person name="Lapidus A."/>
            <person name="Barry K."/>
            <person name="Detter J.C."/>
            <person name="Glavina del Rio T."/>
            <person name="Dalin E."/>
            <person name="Tice H."/>
            <person name="Pitluck S."/>
            <person name="Chertkov O."/>
            <person name="Brettin T."/>
            <person name="Bruce D."/>
            <person name="Han C."/>
            <person name="Tapia R."/>
            <person name="Gilna P."/>
            <person name="Schmutz J."/>
            <person name="Larimer F."/>
            <person name="Land M."/>
            <person name="Hauser L."/>
            <person name="Kyrpides N."/>
            <person name="Kim E."/>
            <person name="Stahl D."/>
            <person name="Richardson P."/>
        </authorList>
    </citation>
    <scope>NUCLEOTIDE SEQUENCE [LARGE SCALE GENOMIC DNA]</scope>
    <source>
        <strain>JS42</strain>
    </source>
</reference>
<organism>
    <name type="scientific">Acidovorax sp. (strain JS42)</name>
    <dbReference type="NCBI Taxonomy" id="232721"/>
    <lineage>
        <taxon>Bacteria</taxon>
        <taxon>Pseudomonadati</taxon>
        <taxon>Pseudomonadota</taxon>
        <taxon>Betaproteobacteria</taxon>
        <taxon>Burkholderiales</taxon>
        <taxon>Comamonadaceae</taxon>
        <taxon>Acidovorax</taxon>
    </lineage>
</organism>
<comment type="function">
    <text evidence="1">Involved in the biosynthesis of branched-chain amino acids (BCAA). Catalyzes an alkyl-migration followed by a ketol-acid reduction of (S)-2-acetolactate (S2AL) to yield (R)-2,3-dihydroxy-isovalerate. In the isomerase reaction, S2AL is rearranged via a Mg-dependent methyl migration to produce 3-hydroxy-3-methyl-2-ketobutyrate (HMKB). In the reductase reaction, this 2-ketoacid undergoes a metal-dependent reduction by NADPH to yield (R)-2,3-dihydroxy-isovalerate.</text>
</comment>
<comment type="catalytic activity">
    <reaction evidence="1">
        <text>(2R)-2,3-dihydroxy-3-methylbutanoate + NADP(+) = (2S)-2-acetolactate + NADPH + H(+)</text>
        <dbReference type="Rhea" id="RHEA:22068"/>
        <dbReference type="ChEBI" id="CHEBI:15378"/>
        <dbReference type="ChEBI" id="CHEBI:49072"/>
        <dbReference type="ChEBI" id="CHEBI:57783"/>
        <dbReference type="ChEBI" id="CHEBI:58349"/>
        <dbReference type="ChEBI" id="CHEBI:58476"/>
        <dbReference type="EC" id="1.1.1.86"/>
    </reaction>
</comment>
<comment type="catalytic activity">
    <reaction evidence="1">
        <text>(2R,3R)-2,3-dihydroxy-3-methylpentanoate + NADP(+) = (S)-2-ethyl-2-hydroxy-3-oxobutanoate + NADPH + H(+)</text>
        <dbReference type="Rhea" id="RHEA:13493"/>
        <dbReference type="ChEBI" id="CHEBI:15378"/>
        <dbReference type="ChEBI" id="CHEBI:49256"/>
        <dbReference type="ChEBI" id="CHEBI:49258"/>
        <dbReference type="ChEBI" id="CHEBI:57783"/>
        <dbReference type="ChEBI" id="CHEBI:58349"/>
        <dbReference type="EC" id="1.1.1.86"/>
    </reaction>
</comment>
<comment type="cofactor">
    <cofactor evidence="1">
        <name>Mg(2+)</name>
        <dbReference type="ChEBI" id="CHEBI:18420"/>
    </cofactor>
    <text evidence="1">Binds 2 magnesium ions per subunit.</text>
</comment>
<comment type="pathway">
    <text evidence="1">Amino-acid biosynthesis; L-isoleucine biosynthesis; L-isoleucine from 2-oxobutanoate: step 2/4.</text>
</comment>
<comment type="pathway">
    <text evidence="1">Amino-acid biosynthesis; L-valine biosynthesis; L-valine from pyruvate: step 2/4.</text>
</comment>
<comment type="similarity">
    <text evidence="1">Belongs to the ketol-acid reductoisomerase family.</text>
</comment>